<keyword id="KW-0012">Acyltransferase</keyword>
<keyword id="KW-0133">Cell shape</keyword>
<keyword id="KW-0961">Cell wall biogenesis/degradation</keyword>
<keyword id="KW-0963">Cytoplasm</keyword>
<keyword id="KW-0460">Magnesium</keyword>
<keyword id="KW-0479">Metal-binding</keyword>
<keyword id="KW-0511">Multifunctional enzyme</keyword>
<keyword id="KW-0548">Nucleotidyltransferase</keyword>
<keyword id="KW-0573">Peptidoglycan synthesis</keyword>
<keyword id="KW-0677">Repeat</keyword>
<keyword id="KW-0808">Transferase</keyword>
<protein>
    <recommendedName>
        <fullName evidence="1">Bifunctional protein GlmU</fullName>
    </recommendedName>
    <domain>
        <recommendedName>
            <fullName evidence="1">UDP-N-acetylglucosamine pyrophosphorylase</fullName>
            <ecNumber evidence="1">2.7.7.23</ecNumber>
        </recommendedName>
        <alternativeName>
            <fullName evidence="1">N-acetylglucosamine-1-phosphate uridyltransferase</fullName>
        </alternativeName>
    </domain>
    <domain>
        <recommendedName>
            <fullName evidence="1">Glucosamine-1-phosphate N-acetyltransferase</fullName>
            <ecNumber evidence="1">2.3.1.157</ecNumber>
        </recommendedName>
    </domain>
</protein>
<proteinExistence type="inferred from homology"/>
<dbReference type="EC" id="2.7.7.23" evidence="1"/>
<dbReference type="EC" id="2.3.1.157" evidence="1"/>
<dbReference type="EMBL" id="CP000384">
    <property type="protein sequence ID" value="ABG10353.1"/>
    <property type="molecule type" value="Genomic_DNA"/>
</dbReference>
<dbReference type="SMR" id="Q1B431"/>
<dbReference type="KEGG" id="mmc:Mmcs_4248"/>
<dbReference type="HOGENOM" id="CLU_029499_15_2_11"/>
<dbReference type="BioCyc" id="MSP164756:G1G6O-4339-MONOMER"/>
<dbReference type="UniPathway" id="UPA00113">
    <property type="reaction ID" value="UER00532"/>
</dbReference>
<dbReference type="UniPathway" id="UPA00113">
    <property type="reaction ID" value="UER00533"/>
</dbReference>
<dbReference type="UniPathway" id="UPA00973"/>
<dbReference type="GO" id="GO:0005737">
    <property type="term" value="C:cytoplasm"/>
    <property type="evidence" value="ECO:0007669"/>
    <property type="project" value="UniProtKB-SubCell"/>
</dbReference>
<dbReference type="GO" id="GO:0016020">
    <property type="term" value="C:membrane"/>
    <property type="evidence" value="ECO:0007669"/>
    <property type="project" value="GOC"/>
</dbReference>
<dbReference type="GO" id="GO:0019134">
    <property type="term" value="F:glucosamine-1-phosphate N-acetyltransferase activity"/>
    <property type="evidence" value="ECO:0007669"/>
    <property type="project" value="UniProtKB-UniRule"/>
</dbReference>
<dbReference type="GO" id="GO:0000287">
    <property type="term" value="F:magnesium ion binding"/>
    <property type="evidence" value="ECO:0007669"/>
    <property type="project" value="UniProtKB-UniRule"/>
</dbReference>
<dbReference type="GO" id="GO:0003977">
    <property type="term" value="F:UDP-N-acetylglucosamine diphosphorylase activity"/>
    <property type="evidence" value="ECO:0007669"/>
    <property type="project" value="UniProtKB-UniRule"/>
</dbReference>
<dbReference type="GO" id="GO:0000902">
    <property type="term" value="P:cell morphogenesis"/>
    <property type="evidence" value="ECO:0007669"/>
    <property type="project" value="UniProtKB-UniRule"/>
</dbReference>
<dbReference type="GO" id="GO:0071555">
    <property type="term" value="P:cell wall organization"/>
    <property type="evidence" value="ECO:0007669"/>
    <property type="project" value="UniProtKB-KW"/>
</dbReference>
<dbReference type="GO" id="GO:0009245">
    <property type="term" value="P:lipid A biosynthetic process"/>
    <property type="evidence" value="ECO:0007669"/>
    <property type="project" value="UniProtKB-UniRule"/>
</dbReference>
<dbReference type="GO" id="GO:0009252">
    <property type="term" value="P:peptidoglycan biosynthetic process"/>
    <property type="evidence" value="ECO:0007669"/>
    <property type="project" value="UniProtKB-UniRule"/>
</dbReference>
<dbReference type="GO" id="GO:0008360">
    <property type="term" value="P:regulation of cell shape"/>
    <property type="evidence" value="ECO:0007669"/>
    <property type="project" value="UniProtKB-KW"/>
</dbReference>
<dbReference type="GO" id="GO:0006048">
    <property type="term" value="P:UDP-N-acetylglucosamine biosynthetic process"/>
    <property type="evidence" value="ECO:0007669"/>
    <property type="project" value="UniProtKB-UniPathway"/>
</dbReference>
<dbReference type="CDD" id="cd02540">
    <property type="entry name" value="GT2_GlmU_N_bac"/>
    <property type="match status" value="1"/>
</dbReference>
<dbReference type="CDD" id="cd03353">
    <property type="entry name" value="LbH_GlmU_C"/>
    <property type="match status" value="1"/>
</dbReference>
<dbReference type="Gene3D" id="2.160.10.10">
    <property type="entry name" value="Hexapeptide repeat proteins"/>
    <property type="match status" value="1"/>
</dbReference>
<dbReference type="Gene3D" id="3.90.550.10">
    <property type="entry name" value="Spore Coat Polysaccharide Biosynthesis Protein SpsA, Chain A"/>
    <property type="match status" value="1"/>
</dbReference>
<dbReference type="HAMAP" id="MF_01631">
    <property type="entry name" value="GlmU"/>
    <property type="match status" value="1"/>
</dbReference>
<dbReference type="InterPro" id="IPR005882">
    <property type="entry name" value="Bifunctional_GlmU"/>
</dbReference>
<dbReference type="InterPro" id="IPR050065">
    <property type="entry name" value="GlmU-like"/>
</dbReference>
<dbReference type="InterPro" id="IPR038009">
    <property type="entry name" value="GlmU_C_LbH"/>
</dbReference>
<dbReference type="InterPro" id="IPR001451">
    <property type="entry name" value="Hexapep"/>
</dbReference>
<dbReference type="InterPro" id="IPR025877">
    <property type="entry name" value="MobA-like_NTP_Trfase"/>
</dbReference>
<dbReference type="InterPro" id="IPR029044">
    <property type="entry name" value="Nucleotide-diphossugar_trans"/>
</dbReference>
<dbReference type="InterPro" id="IPR011004">
    <property type="entry name" value="Trimer_LpxA-like_sf"/>
</dbReference>
<dbReference type="NCBIfam" id="TIGR01173">
    <property type="entry name" value="glmU"/>
    <property type="match status" value="1"/>
</dbReference>
<dbReference type="NCBIfam" id="NF010932">
    <property type="entry name" value="PRK14352.1"/>
    <property type="match status" value="1"/>
</dbReference>
<dbReference type="PANTHER" id="PTHR43584:SF3">
    <property type="entry name" value="BIFUNCTIONAL PROTEIN GLMU"/>
    <property type="match status" value="1"/>
</dbReference>
<dbReference type="PANTHER" id="PTHR43584">
    <property type="entry name" value="NUCLEOTIDYL TRANSFERASE"/>
    <property type="match status" value="1"/>
</dbReference>
<dbReference type="Pfam" id="PF00132">
    <property type="entry name" value="Hexapep"/>
    <property type="match status" value="1"/>
</dbReference>
<dbReference type="Pfam" id="PF12804">
    <property type="entry name" value="NTP_transf_3"/>
    <property type="match status" value="1"/>
</dbReference>
<dbReference type="SUPFAM" id="SSF53448">
    <property type="entry name" value="Nucleotide-diphospho-sugar transferases"/>
    <property type="match status" value="1"/>
</dbReference>
<dbReference type="SUPFAM" id="SSF51161">
    <property type="entry name" value="Trimeric LpxA-like enzymes"/>
    <property type="match status" value="1"/>
</dbReference>
<organism>
    <name type="scientific">Mycobacterium sp. (strain MCS)</name>
    <dbReference type="NCBI Taxonomy" id="164756"/>
    <lineage>
        <taxon>Bacteria</taxon>
        <taxon>Bacillati</taxon>
        <taxon>Actinomycetota</taxon>
        <taxon>Actinomycetes</taxon>
        <taxon>Mycobacteriales</taxon>
        <taxon>Mycobacteriaceae</taxon>
        <taxon>Mycobacterium</taxon>
    </lineage>
</organism>
<reference key="1">
    <citation type="submission" date="2006-06" db="EMBL/GenBank/DDBJ databases">
        <title>Complete sequence of chromosome of Mycobacterium sp. MCS.</title>
        <authorList>
            <consortium name="US DOE Joint Genome Institute"/>
            <person name="Copeland A."/>
            <person name="Lucas S."/>
            <person name="Lapidus A."/>
            <person name="Barry K."/>
            <person name="Detter J.C."/>
            <person name="Glavina del Rio T."/>
            <person name="Hammon N."/>
            <person name="Israni S."/>
            <person name="Dalin E."/>
            <person name="Tice H."/>
            <person name="Pitluck S."/>
            <person name="Martinez M."/>
            <person name="Schmutz J."/>
            <person name="Larimer F."/>
            <person name="Land M."/>
            <person name="Hauser L."/>
            <person name="Kyrpides N."/>
            <person name="Kim E."/>
            <person name="Miller C.D."/>
            <person name="Hughes J.E."/>
            <person name="Anderson A.J."/>
            <person name="Sims R.C."/>
            <person name="Richardson P."/>
        </authorList>
    </citation>
    <scope>NUCLEOTIDE SEQUENCE [LARGE SCALE GENOMIC DNA]</scope>
    <source>
        <strain>MCS</strain>
    </source>
</reference>
<name>GLMU_MYCSS</name>
<accession>Q1B431</accession>
<gene>
    <name evidence="1" type="primary">glmU</name>
    <name type="ordered locus">Mmcs_4248</name>
</gene>
<comment type="function">
    <text evidence="1">Catalyzes the last two sequential reactions in the de novo biosynthetic pathway for UDP-N-acetylglucosamine (UDP-GlcNAc). The C-terminal domain catalyzes the transfer of acetyl group from acetyl coenzyme A to glucosamine-1-phosphate (GlcN-1-P) to produce N-acetylglucosamine-1-phosphate (GlcNAc-1-P), which is converted into UDP-GlcNAc by the transfer of uridine 5-monophosphate (from uridine 5-triphosphate), a reaction catalyzed by the N-terminal domain.</text>
</comment>
<comment type="catalytic activity">
    <reaction evidence="1">
        <text>alpha-D-glucosamine 1-phosphate + acetyl-CoA = N-acetyl-alpha-D-glucosamine 1-phosphate + CoA + H(+)</text>
        <dbReference type="Rhea" id="RHEA:13725"/>
        <dbReference type="ChEBI" id="CHEBI:15378"/>
        <dbReference type="ChEBI" id="CHEBI:57287"/>
        <dbReference type="ChEBI" id="CHEBI:57288"/>
        <dbReference type="ChEBI" id="CHEBI:57776"/>
        <dbReference type="ChEBI" id="CHEBI:58516"/>
        <dbReference type="EC" id="2.3.1.157"/>
    </reaction>
</comment>
<comment type="catalytic activity">
    <reaction evidence="1">
        <text>N-acetyl-alpha-D-glucosamine 1-phosphate + UTP + H(+) = UDP-N-acetyl-alpha-D-glucosamine + diphosphate</text>
        <dbReference type="Rhea" id="RHEA:13509"/>
        <dbReference type="ChEBI" id="CHEBI:15378"/>
        <dbReference type="ChEBI" id="CHEBI:33019"/>
        <dbReference type="ChEBI" id="CHEBI:46398"/>
        <dbReference type="ChEBI" id="CHEBI:57705"/>
        <dbReference type="ChEBI" id="CHEBI:57776"/>
        <dbReference type="EC" id="2.7.7.23"/>
    </reaction>
</comment>
<comment type="cofactor">
    <cofactor evidence="1">
        <name>Mg(2+)</name>
        <dbReference type="ChEBI" id="CHEBI:18420"/>
    </cofactor>
    <text evidence="1">Binds 1 Mg(2+) ion per subunit.</text>
</comment>
<comment type="pathway">
    <text evidence="1">Nucleotide-sugar biosynthesis; UDP-N-acetyl-alpha-D-glucosamine biosynthesis; N-acetyl-alpha-D-glucosamine 1-phosphate from alpha-D-glucosamine 6-phosphate (route II): step 2/2.</text>
</comment>
<comment type="pathway">
    <text evidence="1">Nucleotide-sugar biosynthesis; UDP-N-acetyl-alpha-D-glucosamine biosynthesis; UDP-N-acetyl-alpha-D-glucosamine from N-acetyl-alpha-D-glucosamine 1-phosphate: step 1/1.</text>
</comment>
<comment type="pathway">
    <text evidence="1">Bacterial outer membrane biogenesis; LPS lipid A biosynthesis.</text>
</comment>
<comment type="subunit">
    <text evidence="1">Homotrimer.</text>
</comment>
<comment type="subcellular location">
    <subcellularLocation>
        <location evidence="1">Cytoplasm</location>
    </subcellularLocation>
</comment>
<comment type="similarity">
    <text evidence="1">In the N-terminal section; belongs to the N-acetylglucosamine-1-phosphate uridyltransferase family.</text>
</comment>
<comment type="similarity">
    <text evidence="1">In the C-terminal section; belongs to the transferase hexapeptide repeat family.</text>
</comment>
<sequence length="497" mass="51455">MTSSTTSSTDTAVLVLAAGAGTRMRSDIPKVLHTLGGRSMLAHALHTVAKVAPQHLVVVLGHDRERIAPAVEALATDLGRPIDVAIQDQQLGTGHAAECGLAALPEDFTGVVVVTAGDVPLLDADTMADLLATHGSAAATVLTTTVDDPTGYGRILRTQDNEVTSIVEQADASPSQRAIREVNAGVYAFDITALRSALRRLRSDNAQHELYLTDVIAIFRQDGLSVRARHVDDSALVAGVNDRVQLAALGAELNRRIVTAHQRAGVTVIDPGSTWIDVDVTIGRDTVIRPGTQLLGRTRVGGRCDVGPDTTLSDVTVGDGASVVRTHGSESLIGAGATVGPFTYLRPGTALGAEGKLGAFVETKNATIGAGTKVPHLTYVGDADIGEHSNIGASSVFVNYDGETKNRTTIGSHVRTGSDTMFVAPVTVGDGAYTGAGTVIRRNVPPGALAVSAGSQRNIEGWVVRKRPGSAAARAAERASGEAAEQALGHHDDSQGS</sequence>
<feature type="chain" id="PRO_0000263142" description="Bifunctional protein GlmU">
    <location>
        <begin position="1"/>
        <end position="497"/>
    </location>
</feature>
<feature type="region of interest" description="Pyrophosphorylase" evidence="1">
    <location>
        <begin position="1"/>
        <end position="243"/>
    </location>
</feature>
<feature type="region of interest" description="Linker" evidence="1">
    <location>
        <begin position="244"/>
        <end position="264"/>
    </location>
</feature>
<feature type="region of interest" description="N-acetyltransferase" evidence="1">
    <location>
        <begin position="265"/>
        <end position="497"/>
    </location>
</feature>
<feature type="region of interest" description="Disordered" evidence="2">
    <location>
        <begin position="473"/>
        <end position="497"/>
    </location>
</feature>
<feature type="compositionally biased region" description="Basic and acidic residues" evidence="2">
    <location>
        <begin position="488"/>
        <end position="497"/>
    </location>
</feature>
<feature type="active site" description="Proton acceptor" evidence="1">
    <location>
        <position position="376"/>
    </location>
</feature>
<feature type="binding site" evidence="1">
    <location>
        <begin position="16"/>
        <end position="19"/>
    </location>
    <ligand>
        <name>UDP-N-acetyl-alpha-D-glucosamine</name>
        <dbReference type="ChEBI" id="CHEBI:57705"/>
    </ligand>
</feature>
<feature type="binding site" evidence="1">
    <location>
        <position position="30"/>
    </location>
    <ligand>
        <name>UDP-N-acetyl-alpha-D-glucosamine</name>
        <dbReference type="ChEBI" id="CHEBI:57705"/>
    </ligand>
</feature>
<feature type="binding site" evidence="1">
    <location>
        <position position="87"/>
    </location>
    <ligand>
        <name>UDP-N-acetyl-alpha-D-glucosamine</name>
        <dbReference type="ChEBI" id="CHEBI:57705"/>
    </ligand>
</feature>
<feature type="binding site" evidence="1">
    <location>
        <begin position="92"/>
        <end position="93"/>
    </location>
    <ligand>
        <name>UDP-N-acetyl-alpha-D-glucosamine</name>
        <dbReference type="ChEBI" id="CHEBI:57705"/>
    </ligand>
</feature>
<feature type="binding site" evidence="1">
    <location>
        <position position="118"/>
    </location>
    <ligand>
        <name>Mg(2+)</name>
        <dbReference type="ChEBI" id="CHEBI:18420"/>
    </ligand>
</feature>
<feature type="binding site" evidence="1">
    <location>
        <position position="153"/>
    </location>
    <ligand>
        <name>UDP-N-acetyl-alpha-D-glucosamine</name>
        <dbReference type="ChEBI" id="CHEBI:57705"/>
    </ligand>
</feature>
<feature type="binding site" evidence="1">
    <location>
        <position position="168"/>
    </location>
    <ligand>
        <name>UDP-N-acetyl-alpha-D-glucosamine</name>
        <dbReference type="ChEBI" id="CHEBI:57705"/>
    </ligand>
</feature>
<feature type="binding site" evidence="1">
    <location>
        <position position="183"/>
    </location>
    <ligand>
        <name>UDP-N-acetyl-alpha-D-glucosamine</name>
        <dbReference type="ChEBI" id="CHEBI:57705"/>
    </ligand>
</feature>
<feature type="binding site" evidence="1">
    <location>
        <position position="241"/>
    </location>
    <ligand>
        <name>Mg(2+)</name>
        <dbReference type="ChEBI" id="CHEBI:18420"/>
    </ligand>
</feature>
<feature type="binding site" evidence="1">
    <location>
        <position position="241"/>
    </location>
    <ligand>
        <name>UDP-N-acetyl-alpha-D-glucosamine</name>
        <dbReference type="ChEBI" id="CHEBI:57705"/>
    </ligand>
</feature>
<feature type="binding site" evidence="1">
    <location>
        <position position="346"/>
    </location>
    <ligand>
        <name>UDP-N-acetyl-alpha-D-glucosamine</name>
        <dbReference type="ChEBI" id="CHEBI:57705"/>
    </ligand>
</feature>
<feature type="binding site" evidence="1">
    <location>
        <position position="364"/>
    </location>
    <ligand>
        <name>UDP-N-acetyl-alpha-D-glucosamine</name>
        <dbReference type="ChEBI" id="CHEBI:57705"/>
    </ligand>
</feature>
<feature type="binding site" evidence="1">
    <location>
        <position position="379"/>
    </location>
    <ligand>
        <name>UDP-N-acetyl-alpha-D-glucosamine</name>
        <dbReference type="ChEBI" id="CHEBI:57705"/>
    </ligand>
</feature>
<feature type="binding site" evidence="1">
    <location>
        <position position="390"/>
    </location>
    <ligand>
        <name>UDP-N-acetyl-alpha-D-glucosamine</name>
        <dbReference type="ChEBI" id="CHEBI:57705"/>
    </ligand>
</feature>
<feature type="binding site" evidence="1">
    <location>
        <position position="393"/>
    </location>
    <ligand>
        <name>acetyl-CoA</name>
        <dbReference type="ChEBI" id="CHEBI:57288"/>
    </ligand>
</feature>
<feature type="binding site" evidence="1">
    <location>
        <begin position="399"/>
        <end position="400"/>
    </location>
    <ligand>
        <name>acetyl-CoA</name>
        <dbReference type="ChEBI" id="CHEBI:57288"/>
    </ligand>
</feature>
<feature type="binding site" evidence="1">
    <location>
        <position position="418"/>
    </location>
    <ligand>
        <name>acetyl-CoA</name>
        <dbReference type="ChEBI" id="CHEBI:57288"/>
    </ligand>
</feature>
<feature type="binding site" evidence="1">
    <location>
        <position position="436"/>
    </location>
    <ligand>
        <name>acetyl-CoA</name>
        <dbReference type="ChEBI" id="CHEBI:57288"/>
    </ligand>
</feature>
<evidence type="ECO:0000255" key="1">
    <source>
        <dbReference type="HAMAP-Rule" id="MF_01631"/>
    </source>
</evidence>
<evidence type="ECO:0000256" key="2">
    <source>
        <dbReference type="SAM" id="MobiDB-lite"/>
    </source>
</evidence>